<dbReference type="EMBL" id="CP000266">
    <property type="protein sequence ID" value="ABF05367.1"/>
    <property type="molecule type" value="Genomic_DNA"/>
</dbReference>
<dbReference type="RefSeq" id="WP_000358960.1">
    <property type="nucleotide sequence ID" value="NC_008258.1"/>
</dbReference>
<dbReference type="SMR" id="Q0SZZ8"/>
<dbReference type="GeneID" id="98390426"/>
<dbReference type="KEGG" id="sfv:SFV_3324"/>
<dbReference type="HOGENOM" id="CLU_098841_0_1_6"/>
<dbReference type="Proteomes" id="UP000000659">
    <property type="component" value="Chromosome"/>
</dbReference>
<dbReference type="GO" id="GO:0022625">
    <property type="term" value="C:cytosolic large ribosomal subunit"/>
    <property type="evidence" value="ECO:0007669"/>
    <property type="project" value="TreeGrafter"/>
</dbReference>
<dbReference type="GO" id="GO:0008097">
    <property type="term" value="F:5S rRNA binding"/>
    <property type="evidence" value="ECO:0007669"/>
    <property type="project" value="TreeGrafter"/>
</dbReference>
<dbReference type="GO" id="GO:0003735">
    <property type="term" value="F:structural constituent of ribosome"/>
    <property type="evidence" value="ECO:0007669"/>
    <property type="project" value="InterPro"/>
</dbReference>
<dbReference type="GO" id="GO:0006412">
    <property type="term" value="P:translation"/>
    <property type="evidence" value="ECO:0007669"/>
    <property type="project" value="UniProtKB-UniRule"/>
</dbReference>
<dbReference type="CDD" id="cd00432">
    <property type="entry name" value="Ribosomal_L18_L5e"/>
    <property type="match status" value="1"/>
</dbReference>
<dbReference type="FunFam" id="3.30.420.100:FF:000001">
    <property type="entry name" value="50S ribosomal protein L18"/>
    <property type="match status" value="1"/>
</dbReference>
<dbReference type="Gene3D" id="3.30.420.100">
    <property type="match status" value="1"/>
</dbReference>
<dbReference type="HAMAP" id="MF_01337_B">
    <property type="entry name" value="Ribosomal_uL18_B"/>
    <property type="match status" value="1"/>
</dbReference>
<dbReference type="InterPro" id="IPR004389">
    <property type="entry name" value="Ribosomal_uL18_bac-type"/>
</dbReference>
<dbReference type="InterPro" id="IPR005484">
    <property type="entry name" value="Ribosomal_uL18_bac/euk"/>
</dbReference>
<dbReference type="NCBIfam" id="TIGR00060">
    <property type="entry name" value="L18_bact"/>
    <property type="match status" value="1"/>
</dbReference>
<dbReference type="PANTHER" id="PTHR12899">
    <property type="entry name" value="39S RIBOSOMAL PROTEIN L18, MITOCHONDRIAL"/>
    <property type="match status" value="1"/>
</dbReference>
<dbReference type="PANTHER" id="PTHR12899:SF3">
    <property type="entry name" value="LARGE RIBOSOMAL SUBUNIT PROTEIN UL18M"/>
    <property type="match status" value="1"/>
</dbReference>
<dbReference type="Pfam" id="PF00861">
    <property type="entry name" value="Ribosomal_L18p"/>
    <property type="match status" value="1"/>
</dbReference>
<dbReference type="SUPFAM" id="SSF53137">
    <property type="entry name" value="Translational machinery components"/>
    <property type="match status" value="1"/>
</dbReference>
<name>RL18_SHIF8</name>
<protein>
    <recommendedName>
        <fullName evidence="1">Large ribosomal subunit protein uL18</fullName>
    </recommendedName>
    <alternativeName>
        <fullName evidence="2">50S ribosomal protein L18</fullName>
    </alternativeName>
</protein>
<sequence length="117" mass="12770">MDKKSARIRRATRARRKLQELGATRLVVHRTPRHIYAQVIAPNGSEVLVAASTVEKAIAEQLKYTGNKDAAAAVGKAVAERALEKGIKDVSFDRSGFQYHGRVQALADAAREAGLQF</sequence>
<organism>
    <name type="scientific">Shigella flexneri serotype 5b (strain 8401)</name>
    <dbReference type="NCBI Taxonomy" id="373384"/>
    <lineage>
        <taxon>Bacteria</taxon>
        <taxon>Pseudomonadati</taxon>
        <taxon>Pseudomonadota</taxon>
        <taxon>Gammaproteobacteria</taxon>
        <taxon>Enterobacterales</taxon>
        <taxon>Enterobacteriaceae</taxon>
        <taxon>Shigella</taxon>
    </lineage>
</organism>
<evidence type="ECO:0000255" key="1">
    <source>
        <dbReference type="HAMAP-Rule" id="MF_01337"/>
    </source>
</evidence>
<evidence type="ECO:0000305" key="2"/>
<keyword id="KW-0687">Ribonucleoprotein</keyword>
<keyword id="KW-0689">Ribosomal protein</keyword>
<keyword id="KW-0694">RNA-binding</keyword>
<keyword id="KW-0699">rRNA-binding</keyword>
<gene>
    <name evidence="1" type="primary">rplR</name>
    <name type="ordered locus">SFV_3324</name>
</gene>
<reference key="1">
    <citation type="journal article" date="2006" name="BMC Genomics">
        <title>Complete genome sequence of Shigella flexneri 5b and comparison with Shigella flexneri 2a.</title>
        <authorList>
            <person name="Nie H."/>
            <person name="Yang F."/>
            <person name="Zhang X."/>
            <person name="Yang J."/>
            <person name="Chen L."/>
            <person name="Wang J."/>
            <person name="Xiong Z."/>
            <person name="Peng J."/>
            <person name="Sun L."/>
            <person name="Dong J."/>
            <person name="Xue Y."/>
            <person name="Xu X."/>
            <person name="Chen S."/>
            <person name="Yao Z."/>
            <person name="Shen Y."/>
            <person name="Jin Q."/>
        </authorList>
    </citation>
    <scope>NUCLEOTIDE SEQUENCE [LARGE SCALE GENOMIC DNA]</scope>
    <source>
        <strain>8401</strain>
    </source>
</reference>
<accession>Q0SZZ8</accession>
<feature type="chain" id="PRO_1000053114" description="Large ribosomal subunit protein uL18">
    <location>
        <begin position="1"/>
        <end position="117"/>
    </location>
</feature>
<comment type="function">
    <text evidence="1">This is one of the proteins that bind and probably mediate the attachment of the 5S RNA into the large ribosomal subunit, where it forms part of the central protuberance.</text>
</comment>
<comment type="subunit">
    <text evidence="1">Part of the 50S ribosomal subunit; part of the 5S rRNA/L5/L18/L25 subcomplex. Contacts the 5S and 23S rRNAs.</text>
</comment>
<comment type="similarity">
    <text evidence="1">Belongs to the universal ribosomal protein uL18 family.</text>
</comment>
<proteinExistence type="inferred from homology"/>